<protein>
    <recommendedName>
        <fullName>G-protein coupled receptor homolog U51</fullName>
    </recommendedName>
</protein>
<feature type="chain" id="PRO_0000070257" description="G-protein coupled receptor homolog U51">
    <location>
        <begin position="1"/>
        <end position="301"/>
    </location>
</feature>
<feature type="topological domain" description="Extracellular" evidence="1">
    <location>
        <begin position="1"/>
        <end position="15"/>
    </location>
</feature>
<feature type="transmembrane region" description="Helical; Name=1" evidence="1">
    <location>
        <begin position="16"/>
        <end position="36"/>
    </location>
</feature>
<feature type="topological domain" description="Cytoplasmic" evidence="1">
    <location>
        <begin position="37"/>
        <end position="48"/>
    </location>
</feature>
<feature type="transmembrane region" description="Helical; Name=2" evidence="1">
    <location>
        <begin position="49"/>
        <end position="69"/>
    </location>
</feature>
<feature type="topological domain" description="Extracellular" evidence="1">
    <location>
        <begin position="70"/>
        <end position="82"/>
    </location>
</feature>
<feature type="transmembrane region" description="Helical; Name=3" evidence="1">
    <location>
        <begin position="83"/>
        <end position="103"/>
    </location>
</feature>
<feature type="topological domain" description="Cytoplasmic" evidence="1">
    <location>
        <begin position="104"/>
        <end position="122"/>
    </location>
</feature>
<feature type="transmembrane region" description="Helical; Name=4" evidence="1">
    <location>
        <begin position="123"/>
        <end position="143"/>
    </location>
</feature>
<feature type="topological domain" description="Extracellular" evidence="1">
    <location>
        <begin position="144"/>
        <end position="168"/>
    </location>
</feature>
<feature type="transmembrane region" description="Helical; Name=5" evidence="1">
    <location>
        <begin position="169"/>
        <end position="189"/>
    </location>
</feature>
<feature type="topological domain" description="Cytoplasmic" evidence="1">
    <location>
        <begin position="190"/>
        <end position="199"/>
    </location>
</feature>
<feature type="transmembrane region" description="Helical; Name=6" evidence="1">
    <location>
        <begin position="200"/>
        <end position="220"/>
    </location>
</feature>
<feature type="topological domain" description="Extracellular" evidence="1">
    <location>
        <begin position="221"/>
        <end position="238"/>
    </location>
</feature>
<feature type="transmembrane region" description="Helical; Name=7" evidence="1">
    <location>
        <begin position="239"/>
        <end position="259"/>
    </location>
</feature>
<feature type="topological domain" description="Cytoplasmic" evidence="1">
    <location>
        <begin position="260"/>
        <end position="301"/>
    </location>
</feature>
<feature type="glycosylation site" description="N-linked (GlcNAc...) asparagine; by host" evidence="1">
    <location>
        <position position="153"/>
    </location>
</feature>
<name>VU51_HHV6Z</name>
<comment type="subcellular location">
    <subcellularLocation>
        <location>Host cell membrane</location>
        <topology>Multi-pass membrane protein</topology>
    </subcellularLocation>
</comment>
<comment type="similarity">
    <text evidence="2">Belongs to the G-protein coupled receptor 1 family.</text>
</comment>
<accession>P52542</accession>
<reference key="1">
    <citation type="journal article" date="1995" name="J. Virol.">
        <title>Intragenomic linear amplification of human herpesvirus 6B oriLyt suggests acquisition of oriLyt by transposition.</title>
        <authorList>
            <person name="Stamey F.R."/>
            <person name="Dominguez G."/>
            <person name="Black J.B."/>
            <person name="Dambaugh T.R."/>
            <person name="Pellett P.E."/>
        </authorList>
    </citation>
    <scope>NUCLEOTIDE SEQUENCE [GENOMIC DNA]</scope>
</reference>
<keyword id="KW-0297">G-protein coupled receptor</keyword>
<keyword id="KW-0325">Glycoprotein</keyword>
<keyword id="KW-1032">Host cell membrane</keyword>
<keyword id="KW-1043">Host membrane</keyword>
<keyword id="KW-0472">Membrane</keyword>
<keyword id="KW-0675">Receptor</keyword>
<keyword id="KW-1185">Reference proteome</keyword>
<keyword id="KW-0807">Transducer</keyword>
<keyword id="KW-0812">Transmembrane</keyword>
<keyword id="KW-1133">Transmembrane helix</keyword>
<organismHost>
    <name type="scientific">Homo sapiens</name>
    <name type="common">Human</name>
    <dbReference type="NCBI Taxonomy" id="9606"/>
</organismHost>
<evidence type="ECO:0000255" key="1"/>
<evidence type="ECO:0000255" key="2">
    <source>
        <dbReference type="PROSITE-ProRule" id="PRU00521"/>
    </source>
</evidence>
<proteinExistence type="inferred from homology"/>
<organism>
    <name type="scientific">Human herpesvirus 6B (strain Z29)</name>
    <name type="common">HHV-6 variant B</name>
    <name type="synonym">Human B lymphotropic virus</name>
    <dbReference type="NCBI Taxonomy" id="36351"/>
    <lineage>
        <taxon>Viruses</taxon>
        <taxon>Duplodnaviria</taxon>
        <taxon>Heunggongvirae</taxon>
        <taxon>Peploviricota</taxon>
        <taxon>Herviviricetes</taxon>
        <taxon>Herpesvirales</taxon>
        <taxon>Orthoherpesviridae</taxon>
        <taxon>Betaherpesvirinae</taxon>
        <taxon>Roseolovirus</taxon>
        <taxon>Roseolovirus humanbeta6b</taxon>
        <taxon>Human herpesvirus 6B</taxon>
    </lineage>
</organism>
<dbReference type="EMBL" id="AF157706">
    <property type="protein sequence ID" value="AAB06349.1"/>
    <property type="molecule type" value="Genomic_DNA"/>
</dbReference>
<dbReference type="PIR" id="T44011">
    <property type="entry name" value="T44011"/>
</dbReference>
<dbReference type="RefSeq" id="NP_050232.1">
    <property type="nucleotide sequence ID" value="NC_000898.1"/>
</dbReference>
<dbReference type="SMR" id="P52542"/>
<dbReference type="GlyCosmos" id="P52542">
    <property type="glycosylation" value="1 site, No reported glycans"/>
</dbReference>
<dbReference type="DNASU" id="1497053"/>
<dbReference type="GeneID" id="1497053"/>
<dbReference type="KEGG" id="vg:1497053"/>
<dbReference type="Proteomes" id="UP000006930">
    <property type="component" value="Segment"/>
</dbReference>
<dbReference type="GO" id="GO:0020002">
    <property type="term" value="C:host cell plasma membrane"/>
    <property type="evidence" value="ECO:0007669"/>
    <property type="project" value="UniProtKB-SubCell"/>
</dbReference>
<dbReference type="GO" id="GO:0016020">
    <property type="term" value="C:membrane"/>
    <property type="evidence" value="ECO:0007669"/>
    <property type="project" value="UniProtKB-KW"/>
</dbReference>
<dbReference type="GO" id="GO:0004930">
    <property type="term" value="F:G protein-coupled receptor activity"/>
    <property type="evidence" value="ECO:0007669"/>
    <property type="project" value="UniProtKB-KW"/>
</dbReference>
<dbReference type="CDD" id="cd00637">
    <property type="entry name" value="7tm_classA_rhodopsin-like"/>
    <property type="match status" value="1"/>
</dbReference>
<dbReference type="Gene3D" id="1.20.1070.10">
    <property type="entry name" value="Rhodopsin 7-helix transmembrane proteins"/>
    <property type="match status" value="1"/>
</dbReference>
<dbReference type="InterPro" id="IPR000276">
    <property type="entry name" value="GPCR_Rhodpsn"/>
</dbReference>
<dbReference type="InterPro" id="IPR017452">
    <property type="entry name" value="GPCR_Rhodpsn_7TM"/>
</dbReference>
<dbReference type="Pfam" id="PF00001">
    <property type="entry name" value="7tm_1"/>
    <property type="match status" value="1"/>
</dbReference>
<dbReference type="SUPFAM" id="SSF81321">
    <property type="entry name" value="Family A G protein-coupled receptor-like"/>
    <property type="match status" value="1"/>
</dbReference>
<dbReference type="PROSITE" id="PS50262">
    <property type="entry name" value="G_PROTEIN_RECEP_F1_2"/>
    <property type="match status" value="1"/>
</dbReference>
<sequence length="301" mass="34482">MEKETKSLAWPATAEFYGWVFIFSSIQLCTVVFLTVRFNGFKVGREYAVFTFAGMSFNCFLLPIKMGLLSGHWTLPRDFCAILLYIDDFSAYFSSWSLVFMAIERINYFCYSTPLLNENSKALAKVCFPIVWVVSGVQALQMLNNYKATALQNETGQCFLAFLRSGHDMWLMLVYSVVIPVMLVFFYLYSKNFMLLKDELSSVTTYLCIYLLLGTIAHLPKAALSEIESDKIFYGLRDIFMALPVLKVYYISAMAYCMACDDHTVPVRLCSIWLVNLCKKCFSCTRREKGSDLEVGIKMLK</sequence>
<gene>
    <name type="primary">U51</name>
    <name type="synonym">KA12R</name>
</gene>